<gene>
    <name evidence="1" type="primary">ndhA</name>
    <name type="ordered locus">SYNPCC7002_A0926</name>
</gene>
<proteinExistence type="inferred from homology"/>
<keyword id="KW-0472">Membrane</keyword>
<keyword id="KW-0520">NAD</keyword>
<keyword id="KW-0521">NADP</keyword>
<keyword id="KW-0618">Plastoquinone</keyword>
<keyword id="KW-0874">Quinone</keyword>
<keyword id="KW-1185">Reference proteome</keyword>
<keyword id="KW-0793">Thylakoid</keyword>
<keyword id="KW-1278">Translocase</keyword>
<keyword id="KW-0812">Transmembrane</keyword>
<keyword id="KW-1133">Transmembrane helix</keyword>
<organism>
    <name type="scientific">Picosynechococcus sp. (strain ATCC 27264 / PCC 7002 / PR-6)</name>
    <name type="common">Agmenellum quadruplicatum</name>
    <dbReference type="NCBI Taxonomy" id="32049"/>
    <lineage>
        <taxon>Bacteria</taxon>
        <taxon>Bacillati</taxon>
        <taxon>Cyanobacteriota</taxon>
        <taxon>Cyanophyceae</taxon>
        <taxon>Oscillatoriophycideae</taxon>
        <taxon>Chroococcales</taxon>
        <taxon>Geminocystaceae</taxon>
        <taxon>Picosynechococcus</taxon>
    </lineage>
</organism>
<protein>
    <recommendedName>
        <fullName evidence="1">NAD(P)H-quinone oxidoreductase subunit 1</fullName>
        <ecNumber evidence="1">7.1.1.-</ecNumber>
    </recommendedName>
    <alternativeName>
        <fullName evidence="1">NAD(P)H dehydrogenase I subunit 1</fullName>
    </alternativeName>
    <alternativeName>
        <fullName evidence="1">NDH-1 subunit 1</fullName>
    </alternativeName>
    <alternativeName>
        <fullName evidence="1">NDH-A</fullName>
    </alternativeName>
</protein>
<feature type="chain" id="PRO_0000240046" description="NAD(P)H-quinone oxidoreductase subunit 1">
    <location>
        <begin position="1"/>
        <end position="372"/>
    </location>
</feature>
<feature type="transmembrane region" description="Helical" evidence="1">
    <location>
        <begin position="28"/>
        <end position="48"/>
    </location>
</feature>
<feature type="transmembrane region" description="Helical" evidence="1">
    <location>
        <begin position="97"/>
        <end position="117"/>
    </location>
</feature>
<feature type="transmembrane region" description="Helical" evidence="1">
    <location>
        <begin position="130"/>
        <end position="150"/>
    </location>
</feature>
<feature type="transmembrane region" description="Helical" evidence="1">
    <location>
        <begin position="176"/>
        <end position="196"/>
    </location>
</feature>
<feature type="transmembrane region" description="Helical" evidence="1">
    <location>
        <begin position="204"/>
        <end position="224"/>
    </location>
</feature>
<feature type="transmembrane region" description="Helical" evidence="1">
    <location>
        <begin position="265"/>
        <end position="285"/>
    </location>
</feature>
<feature type="transmembrane region" description="Helical" evidence="1">
    <location>
        <begin position="308"/>
        <end position="328"/>
    </location>
</feature>
<feature type="transmembrane region" description="Helical" evidence="1">
    <location>
        <begin position="351"/>
        <end position="371"/>
    </location>
</feature>
<dbReference type="EC" id="7.1.1.-" evidence="1"/>
<dbReference type="EMBL" id="AF381034">
    <property type="protein sequence ID" value="AAN03533.1"/>
    <property type="molecule type" value="Genomic_DNA"/>
</dbReference>
<dbReference type="EMBL" id="CP000951">
    <property type="protein sequence ID" value="ACA98930.1"/>
    <property type="molecule type" value="Genomic_DNA"/>
</dbReference>
<dbReference type="SMR" id="Q8KX60"/>
<dbReference type="STRING" id="32049.SYNPCC7002_A0926"/>
<dbReference type="KEGG" id="syp:SYNPCC7002_A0926"/>
<dbReference type="eggNOG" id="COG1005">
    <property type="taxonomic scope" value="Bacteria"/>
</dbReference>
<dbReference type="HOGENOM" id="CLU_015134_0_1_3"/>
<dbReference type="Proteomes" id="UP000001688">
    <property type="component" value="Chromosome"/>
</dbReference>
<dbReference type="GO" id="GO:0031676">
    <property type="term" value="C:plasma membrane-derived thylakoid membrane"/>
    <property type="evidence" value="ECO:0007669"/>
    <property type="project" value="UniProtKB-SubCell"/>
</dbReference>
<dbReference type="GO" id="GO:0003954">
    <property type="term" value="F:NADH dehydrogenase activity"/>
    <property type="evidence" value="ECO:0007669"/>
    <property type="project" value="TreeGrafter"/>
</dbReference>
<dbReference type="GO" id="GO:0016655">
    <property type="term" value="F:oxidoreductase activity, acting on NAD(P)H, quinone or similar compound as acceptor"/>
    <property type="evidence" value="ECO:0007669"/>
    <property type="project" value="UniProtKB-UniRule"/>
</dbReference>
<dbReference type="GO" id="GO:0048038">
    <property type="term" value="F:quinone binding"/>
    <property type="evidence" value="ECO:0007669"/>
    <property type="project" value="UniProtKB-KW"/>
</dbReference>
<dbReference type="GO" id="GO:0009060">
    <property type="term" value="P:aerobic respiration"/>
    <property type="evidence" value="ECO:0007669"/>
    <property type="project" value="TreeGrafter"/>
</dbReference>
<dbReference type="GO" id="GO:0019684">
    <property type="term" value="P:photosynthesis, light reaction"/>
    <property type="evidence" value="ECO:0007669"/>
    <property type="project" value="UniProtKB-UniRule"/>
</dbReference>
<dbReference type="HAMAP" id="MF_01350">
    <property type="entry name" value="NDH1_NuoH"/>
    <property type="match status" value="1"/>
</dbReference>
<dbReference type="InterPro" id="IPR001694">
    <property type="entry name" value="NADH_UbQ_OxRdtase_su1/FPO"/>
</dbReference>
<dbReference type="InterPro" id="IPR018086">
    <property type="entry name" value="NADH_UbQ_OxRdtase_su1_CS"/>
</dbReference>
<dbReference type="NCBIfam" id="NF004741">
    <property type="entry name" value="PRK06076.1-2"/>
    <property type="match status" value="1"/>
</dbReference>
<dbReference type="NCBIfam" id="NF004744">
    <property type="entry name" value="PRK06076.1-5"/>
    <property type="match status" value="1"/>
</dbReference>
<dbReference type="PANTHER" id="PTHR11432">
    <property type="entry name" value="NADH DEHYDROGENASE SUBUNIT 1"/>
    <property type="match status" value="1"/>
</dbReference>
<dbReference type="PANTHER" id="PTHR11432:SF3">
    <property type="entry name" value="NADH-UBIQUINONE OXIDOREDUCTASE CHAIN 1"/>
    <property type="match status" value="1"/>
</dbReference>
<dbReference type="Pfam" id="PF00146">
    <property type="entry name" value="NADHdh"/>
    <property type="match status" value="1"/>
</dbReference>
<dbReference type="PROSITE" id="PS00667">
    <property type="entry name" value="COMPLEX1_ND1_1"/>
    <property type="match status" value="1"/>
</dbReference>
<dbReference type="PROSITE" id="PS00668">
    <property type="entry name" value="COMPLEX1_ND1_2"/>
    <property type="match status" value="1"/>
</dbReference>
<accession>Q8KX60</accession>
<accession>B1XIY8</accession>
<comment type="function">
    <text evidence="1">NDH-1 shuttles electrons from an unknown electron donor, via FMN and iron-sulfur (Fe-S) centers, to quinones in the respiratory and/or the photosynthetic chain. The immediate electron acceptor for the enzyme in this species is believed to be plastoquinone. Couples the redox reaction to proton translocation, and thus conserves the redox energy in a proton gradient.</text>
</comment>
<comment type="catalytic activity">
    <reaction evidence="1">
        <text>a plastoquinone + NADH + (n+1) H(+)(in) = a plastoquinol + NAD(+) + n H(+)(out)</text>
        <dbReference type="Rhea" id="RHEA:42608"/>
        <dbReference type="Rhea" id="RHEA-COMP:9561"/>
        <dbReference type="Rhea" id="RHEA-COMP:9562"/>
        <dbReference type="ChEBI" id="CHEBI:15378"/>
        <dbReference type="ChEBI" id="CHEBI:17757"/>
        <dbReference type="ChEBI" id="CHEBI:57540"/>
        <dbReference type="ChEBI" id="CHEBI:57945"/>
        <dbReference type="ChEBI" id="CHEBI:62192"/>
    </reaction>
</comment>
<comment type="catalytic activity">
    <reaction evidence="1">
        <text>a plastoquinone + NADPH + (n+1) H(+)(in) = a plastoquinol + NADP(+) + n H(+)(out)</text>
        <dbReference type="Rhea" id="RHEA:42612"/>
        <dbReference type="Rhea" id="RHEA-COMP:9561"/>
        <dbReference type="Rhea" id="RHEA-COMP:9562"/>
        <dbReference type="ChEBI" id="CHEBI:15378"/>
        <dbReference type="ChEBI" id="CHEBI:17757"/>
        <dbReference type="ChEBI" id="CHEBI:57783"/>
        <dbReference type="ChEBI" id="CHEBI:58349"/>
        <dbReference type="ChEBI" id="CHEBI:62192"/>
    </reaction>
</comment>
<comment type="subunit">
    <text evidence="1">NDH-1 is composed of at least 11 different subunits.</text>
</comment>
<comment type="subcellular location">
    <subcellularLocation>
        <location evidence="1">Cellular thylakoid membrane</location>
        <topology evidence="1">Multi-pass membrane protein</topology>
    </subcellularLocation>
</comment>
<comment type="similarity">
    <text evidence="1">Belongs to the complex I subunit 1 family.</text>
</comment>
<evidence type="ECO:0000255" key="1">
    <source>
        <dbReference type="HAMAP-Rule" id="MF_01350"/>
    </source>
</evidence>
<sequence length="372" mass="40517">MNSGIDLQGSFIETLQSFGLSHEIAKTIWLPLPLLLMIIGATVGVLVVVWLERKISAAAQQRVGPEYAGPLGVLQPVADGLKLVFKEDVVPAKTDPWLFTLGPALVVIPVFLSYLIVPFGQNLVITDLNVGIFLWISLSSIAPIGLLMSGYSSNNKYALLGGLRAAAQSISYEIPLALAVLAIAMMSNSLSTIDIVEQQSGYGILGWNIWRQPVGFLIFWIAALAECERLPFDLPEAEEELVAGYQTEYAGMKFGLFYVGSYVNLVLSALIVSILYLGGWEFPIPLDKLAGWLNVAPSTPWLQVITASLGIIMTLVKTYALVFIAVLLRWTLPRVRIDQLLNFGWKFLLPVALVNLLLTAALKLAFPIAFGG</sequence>
<reference key="1">
    <citation type="submission" date="2001-05" db="EMBL/GenBank/DDBJ databases">
        <title>An analysis of forty genes encoding electron transport proteins from Synechococcus sp. PCC 7002: a comparative study of electron transport proteins from Cyanobacteria and chloroplasts.</title>
        <authorList>
            <person name="Nomura C.T."/>
            <person name="Persson S."/>
            <person name="Zhao J."/>
            <person name="Bryant D.A."/>
        </authorList>
    </citation>
    <scope>NUCLEOTIDE SEQUENCE [GENOMIC DNA]</scope>
</reference>
<reference key="2">
    <citation type="submission" date="2008-02" db="EMBL/GenBank/DDBJ databases">
        <title>Complete sequence of Synechococcus sp. PCC 7002.</title>
        <authorList>
            <person name="Li T."/>
            <person name="Zhao J."/>
            <person name="Zhao C."/>
            <person name="Liu Z."/>
            <person name="Zhao F."/>
            <person name="Marquardt J."/>
            <person name="Nomura C.T."/>
            <person name="Persson S."/>
            <person name="Detter J.C."/>
            <person name="Richardson P.M."/>
            <person name="Lanz C."/>
            <person name="Schuster S.C."/>
            <person name="Wang J."/>
            <person name="Li S."/>
            <person name="Huang X."/>
            <person name="Cai T."/>
            <person name="Yu Z."/>
            <person name="Luo J."/>
            <person name="Zhao J."/>
            <person name="Bryant D.A."/>
        </authorList>
    </citation>
    <scope>NUCLEOTIDE SEQUENCE [LARGE SCALE GENOMIC DNA]</scope>
    <source>
        <strain>ATCC 27264 / PCC 7002 / PR-6</strain>
    </source>
</reference>
<name>NU1C_PICP2</name>